<sequence length="807" mass="91373">MPKQDSLWLKSLRWIQKHLVHTIVVPQDPFADLNLDASRPLAYVMKTESLSDIAALSEITTKLGLPSPYEPLVVNGVVAPRVVCLEGRKPLFGERASNEPFLECFMRLLAVHKEKPELDIQLVPVSLYWGRTPGKEDDTMKAAVLERENPTWLRKCLMILFLGRHNFVQFSNAVSLRYMADEHGTDMGIAHKLARVARVHFRRQRKVMTGPVLPNRQAMFHSLLKSESLRKAIQEEAASKKISETQARETAIEYLDEIAANYSDSLVRIAERFLTWLWNKLYSGINIKGAEQIRQLHHDGHEIVYVPCHRSHMDYLLLSYILYYQGMVPPHIAAGINLNFWPAGPLFRRGGAFFIRRSFNGNKLYTAVFREYLDQLFAKGYSVEYFSEGGRSRTGRLLAPKTGMIAMTINSVLRGIERPVTLVPVYLGYDHVMEVATYHKELSGKKKQKESVWQVFGAIRKLGNFGQGYVNFGEPITLQNFLNETAPNWRTEVADDPEQKPTWLTPAVNVLANRVMTRINDAAAASSITLTSLVLLASEQNALERCLLERQLDLYLTLLKRVPYTSFTSVAEGDGKHLVQQGLELNKFSIHADPLGEIVSIDANQAISMTYYRNNIIHLFIIPSLIASCLTNNKQISRAHILGIVSDFYPLLKAELFMGIKDLPSYVNQVLDLLIEQGLVQESDTLSVVTEHTSQMLLLAGSVSETLQRYAIIFNLLAHRPKMERSELESESHLLAQRLGALHGITAPEFYDKKLYNTLSVKLKELGYFSEKEDKSDVERIRDQANSLLRASVRQTIVASVTAEHIV</sequence>
<accession>A0L2D7</accession>
<keyword id="KW-0012">Acyltransferase</keyword>
<keyword id="KW-0997">Cell inner membrane</keyword>
<keyword id="KW-1003">Cell membrane</keyword>
<keyword id="KW-0444">Lipid biosynthesis</keyword>
<keyword id="KW-0443">Lipid metabolism</keyword>
<keyword id="KW-0472">Membrane</keyword>
<keyword id="KW-0594">Phospholipid biosynthesis</keyword>
<keyword id="KW-1208">Phospholipid metabolism</keyword>
<keyword id="KW-0808">Transferase</keyword>
<name>PLSB_SHESA</name>
<reference key="1">
    <citation type="submission" date="2006-09" db="EMBL/GenBank/DDBJ databases">
        <title>Complete sequence of chromosome 1 of Shewanella sp. ANA-3.</title>
        <authorList>
            <person name="Copeland A."/>
            <person name="Lucas S."/>
            <person name="Lapidus A."/>
            <person name="Barry K."/>
            <person name="Detter J.C."/>
            <person name="Glavina del Rio T."/>
            <person name="Hammon N."/>
            <person name="Israni S."/>
            <person name="Dalin E."/>
            <person name="Tice H."/>
            <person name="Pitluck S."/>
            <person name="Chertkov O."/>
            <person name="Brettin T."/>
            <person name="Bruce D."/>
            <person name="Han C."/>
            <person name="Tapia R."/>
            <person name="Gilna P."/>
            <person name="Schmutz J."/>
            <person name="Larimer F."/>
            <person name="Land M."/>
            <person name="Hauser L."/>
            <person name="Kyrpides N."/>
            <person name="Kim E."/>
            <person name="Newman D."/>
            <person name="Salticov C."/>
            <person name="Konstantinidis K."/>
            <person name="Klappenback J."/>
            <person name="Tiedje J."/>
            <person name="Richardson P."/>
        </authorList>
    </citation>
    <scope>NUCLEOTIDE SEQUENCE [LARGE SCALE GENOMIC DNA]</scope>
    <source>
        <strain>ANA-3</strain>
    </source>
</reference>
<evidence type="ECO:0000255" key="1">
    <source>
        <dbReference type="HAMAP-Rule" id="MF_00393"/>
    </source>
</evidence>
<organism>
    <name type="scientific">Shewanella sp. (strain ANA-3)</name>
    <dbReference type="NCBI Taxonomy" id="94122"/>
    <lineage>
        <taxon>Bacteria</taxon>
        <taxon>Pseudomonadati</taxon>
        <taxon>Pseudomonadota</taxon>
        <taxon>Gammaproteobacteria</taxon>
        <taxon>Alteromonadales</taxon>
        <taxon>Shewanellaceae</taxon>
        <taxon>Shewanella</taxon>
    </lineage>
</organism>
<feature type="chain" id="PRO_1000049460" description="Glycerol-3-phosphate acyltransferase">
    <location>
        <begin position="1"/>
        <end position="807"/>
    </location>
</feature>
<feature type="short sequence motif" description="HXXXXD motif">
    <location>
        <begin position="308"/>
        <end position="313"/>
    </location>
</feature>
<gene>
    <name evidence="1" type="primary">plsB</name>
    <name type="ordered locus">Shewana3_3988</name>
</gene>
<protein>
    <recommendedName>
        <fullName evidence="1">Glycerol-3-phosphate acyltransferase</fullName>
        <shortName evidence="1">GPAT</shortName>
        <ecNumber evidence="1">2.3.1.15</ecNumber>
    </recommendedName>
</protein>
<comment type="catalytic activity">
    <reaction evidence="1">
        <text>sn-glycerol 3-phosphate + an acyl-CoA = a 1-acyl-sn-glycero-3-phosphate + CoA</text>
        <dbReference type="Rhea" id="RHEA:15325"/>
        <dbReference type="ChEBI" id="CHEBI:57287"/>
        <dbReference type="ChEBI" id="CHEBI:57597"/>
        <dbReference type="ChEBI" id="CHEBI:57970"/>
        <dbReference type="ChEBI" id="CHEBI:58342"/>
        <dbReference type="EC" id="2.3.1.15"/>
    </reaction>
</comment>
<comment type="pathway">
    <text evidence="1">Phospholipid metabolism; CDP-diacylglycerol biosynthesis; CDP-diacylglycerol from sn-glycerol 3-phosphate: step 1/3.</text>
</comment>
<comment type="subcellular location">
    <subcellularLocation>
        <location evidence="1">Cell inner membrane</location>
        <topology evidence="1">Peripheral membrane protein</topology>
        <orientation evidence="1">Cytoplasmic side</orientation>
    </subcellularLocation>
</comment>
<comment type="domain">
    <text evidence="1">The HXXXXD motif is essential for acyltransferase activity and may constitute the binding site for the phosphate moiety of the glycerol-3-phosphate.</text>
</comment>
<comment type="similarity">
    <text evidence="1">Belongs to the GPAT/DAPAT family.</text>
</comment>
<dbReference type="EC" id="2.3.1.15" evidence="1"/>
<dbReference type="EMBL" id="CP000469">
    <property type="protein sequence ID" value="ABK50206.1"/>
    <property type="molecule type" value="Genomic_DNA"/>
</dbReference>
<dbReference type="RefSeq" id="WP_011718706.1">
    <property type="nucleotide sequence ID" value="NC_008577.1"/>
</dbReference>
<dbReference type="SMR" id="A0L2D7"/>
<dbReference type="STRING" id="94122.Shewana3_3988"/>
<dbReference type="KEGG" id="shn:Shewana3_3988"/>
<dbReference type="eggNOG" id="COG2937">
    <property type="taxonomic scope" value="Bacteria"/>
</dbReference>
<dbReference type="HOGENOM" id="CLU_015407_0_0_6"/>
<dbReference type="OrthoDB" id="335193at2"/>
<dbReference type="UniPathway" id="UPA00557">
    <property type="reaction ID" value="UER00612"/>
</dbReference>
<dbReference type="Proteomes" id="UP000002589">
    <property type="component" value="Chromosome"/>
</dbReference>
<dbReference type="GO" id="GO:0005886">
    <property type="term" value="C:plasma membrane"/>
    <property type="evidence" value="ECO:0007669"/>
    <property type="project" value="UniProtKB-SubCell"/>
</dbReference>
<dbReference type="GO" id="GO:0004366">
    <property type="term" value="F:glycerol-3-phosphate O-acyltransferase activity"/>
    <property type="evidence" value="ECO:0007669"/>
    <property type="project" value="UniProtKB-UniRule"/>
</dbReference>
<dbReference type="GO" id="GO:0016024">
    <property type="term" value="P:CDP-diacylglycerol biosynthetic process"/>
    <property type="evidence" value="ECO:0007669"/>
    <property type="project" value="UniProtKB-UniRule"/>
</dbReference>
<dbReference type="GO" id="GO:0006631">
    <property type="term" value="P:fatty acid metabolic process"/>
    <property type="evidence" value="ECO:0007669"/>
    <property type="project" value="TreeGrafter"/>
</dbReference>
<dbReference type="CDD" id="cd07993">
    <property type="entry name" value="LPLAT_DHAPAT-like"/>
    <property type="match status" value="1"/>
</dbReference>
<dbReference type="HAMAP" id="MF_00393">
    <property type="entry name" value="Glyc3P_acyltrans"/>
    <property type="match status" value="1"/>
</dbReference>
<dbReference type="InterPro" id="IPR022284">
    <property type="entry name" value="GPAT/DHAPAT"/>
</dbReference>
<dbReference type="InterPro" id="IPR045520">
    <property type="entry name" value="GPAT/DHAPAT_C"/>
</dbReference>
<dbReference type="InterPro" id="IPR041728">
    <property type="entry name" value="GPAT/DHAPAT_LPLAT"/>
</dbReference>
<dbReference type="InterPro" id="IPR028354">
    <property type="entry name" value="GPAT_PlsB"/>
</dbReference>
<dbReference type="InterPro" id="IPR002123">
    <property type="entry name" value="Plipid/glycerol_acylTrfase"/>
</dbReference>
<dbReference type="NCBIfam" id="TIGR03703">
    <property type="entry name" value="plsB"/>
    <property type="match status" value="1"/>
</dbReference>
<dbReference type="NCBIfam" id="NF003441">
    <property type="entry name" value="PRK04974.1"/>
    <property type="match status" value="1"/>
</dbReference>
<dbReference type="PANTHER" id="PTHR12563:SF17">
    <property type="entry name" value="DIHYDROXYACETONE PHOSPHATE ACYLTRANSFERASE"/>
    <property type="match status" value="1"/>
</dbReference>
<dbReference type="PANTHER" id="PTHR12563">
    <property type="entry name" value="GLYCEROL-3-PHOSPHATE ACYLTRANSFERASE"/>
    <property type="match status" value="1"/>
</dbReference>
<dbReference type="Pfam" id="PF01553">
    <property type="entry name" value="Acyltransferase"/>
    <property type="match status" value="1"/>
</dbReference>
<dbReference type="Pfam" id="PF19277">
    <property type="entry name" value="GPAT_C"/>
    <property type="match status" value="1"/>
</dbReference>
<dbReference type="PIRSF" id="PIRSF500064">
    <property type="entry name" value="GPAT"/>
    <property type="match status" value="1"/>
</dbReference>
<dbReference type="PIRSF" id="PIRSF000437">
    <property type="entry name" value="GPAT_DHAPAT"/>
    <property type="match status" value="1"/>
</dbReference>
<dbReference type="SMART" id="SM00563">
    <property type="entry name" value="PlsC"/>
    <property type="match status" value="1"/>
</dbReference>
<dbReference type="SUPFAM" id="SSF69593">
    <property type="entry name" value="Glycerol-3-phosphate (1)-acyltransferase"/>
    <property type="match status" value="1"/>
</dbReference>
<proteinExistence type="inferred from homology"/>